<feature type="chain" id="PRO_1000073781" description="Ribosome-binding factor A">
    <location>
        <begin position="1"/>
        <end position="143"/>
    </location>
</feature>
<feature type="region of interest" description="Disordered" evidence="2">
    <location>
        <begin position="116"/>
        <end position="143"/>
    </location>
</feature>
<feature type="compositionally biased region" description="Basic and acidic residues" evidence="2">
    <location>
        <begin position="116"/>
        <end position="128"/>
    </location>
</feature>
<protein>
    <recommendedName>
        <fullName evidence="1">Ribosome-binding factor A</fullName>
    </recommendedName>
</protein>
<sequence>MAREFSRTRRIAQQLQQELAQVLQRDMKDPRIGFVTVNDVDVSRDLSYAKVYVTFFEEDEKLVQEKVEALDAAAGYIRSLVAGRMKLRVMPELRFIYDSSLVEGMRMSNLVSRVISDDEAKQKQHGDQQDVSQSSDDKSEGED</sequence>
<name>RBFA_SHESH</name>
<proteinExistence type="inferred from homology"/>
<keyword id="KW-0963">Cytoplasm</keyword>
<keyword id="KW-1185">Reference proteome</keyword>
<keyword id="KW-0690">Ribosome biogenesis</keyword>
<reference key="1">
    <citation type="submission" date="2007-08" db="EMBL/GenBank/DDBJ databases">
        <title>Complete sequence of Shewanella sediminis HAW-EB3.</title>
        <authorList>
            <consortium name="US DOE Joint Genome Institute"/>
            <person name="Copeland A."/>
            <person name="Lucas S."/>
            <person name="Lapidus A."/>
            <person name="Barry K."/>
            <person name="Glavina del Rio T."/>
            <person name="Dalin E."/>
            <person name="Tice H."/>
            <person name="Pitluck S."/>
            <person name="Chertkov O."/>
            <person name="Brettin T."/>
            <person name="Bruce D."/>
            <person name="Detter J.C."/>
            <person name="Han C."/>
            <person name="Schmutz J."/>
            <person name="Larimer F."/>
            <person name="Land M."/>
            <person name="Hauser L."/>
            <person name="Kyrpides N."/>
            <person name="Kim E."/>
            <person name="Zhao J.-S."/>
            <person name="Richardson P."/>
        </authorList>
    </citation>
    <scope>NUCLEOTIDE SEQUENCE [LARGE SCALE GENOMIC DNA]</scope>
    <source>
        <strain>HAW-EB3</strain>
    </source>
</reference>
<comment type="function">
    <text evidence="1">One of several proteins that assist in the late maturation steps of the functional core of the 30S ribosomal subunit. Associates with free 30S ribosomal subunits (but not with 30S subunits that are part of 70S ribosomes or polysomes). Required for efficient processing of 16S rRNA. May interact with the 5'-terminal helix region of 16S rRNA.</text>
</comment>
<comment type="subunit">
    <text evidence="1">Monomer. Binds 30S ribosomal subunits, but not 50S ribosomal subunits or 70S ribosomes.</text>
</comment>
<comment type="subcellular location">
    <subcellularLocation>
        <location evidence="1">Cytoplasm</location>
    </subcellularLocation>
</comment>
<comment type="similarity">
    <text evidence="1">Belongs to the RbfA family.</text>
</comment>
<evidence type="ECO:0000255" key="1">
    <source>
        <dbReference type="HAMAP-Rule" id="MF_00003"/>
    </source>
</evidence>
<evidence type="ECO:0000256" key="2">
    <source>
        <dbReference type="SAM" id="MobiDB-lite"/>
    </source>
</evidence>
<accession>A8FYR9</accession>
<organism>
    <name type="scientific">Shewanella sediminis (strain HAW-EB3)</name>
    <dbReference type="NCBI Taxonomy" id="425104"/>
    <lineage>
        <taxon>Bacteria</taxon>
        <taxon>Pseudomonadati</taxon>
        <taxon>Pseudomonadota</taxon>
        <taxon>Gammaproteobacteria</taxon>
        <taxon>Alteromonadales</taxon>
        <taxon>Shewanellaceae</taxon>
        <taxon>Shewanella</taxon>
    </lineage>
</organism>
<gene>
    <name evidence="1" type="primary">rbfA</name>
    <name type="ordered locus">Ssed_3388</name>
</gene>
<dbReference type="EMBL" id="CP000821">
    <property type="protein sequence ID" value="ABV37992.1"/>
    <property type="molecule type" value="Genomic_DNA"/>
</dbReference>
<dbReference type="RefSeq" id="WP_012143722.1">
    <property type="nucleotide sequence ID" value="NC_009831.1"/>
</dbReference>
<dbReference type="SMR" id="A8FYR9"/>
<dbReference type="STRING" id="425104.Ssed_3388"/>
<dbReference type="KEGG" id="sse:Ssed_3388"/>
<dbReference type="eggNOG" id="COG0858">
    <property type="taxonomic scope" value="Bacteria"/>
</dbReference>
<dbReference type="HOGENOM" id="CLU_089475_5_0_6"/>
<dbReference type="OrthoDB" id="307788at2"/>
<dbReference type="Proteomes" id="UP000002015">
    <property type="component" value="Chromosome"/>
</dbReference>
<dbReference type="GO" id="GO:0005829">
    <property type="term" value="C:cytosol"/>
    <property type="evidence" value="ECO:0007669"/>
    <property type="project" value="TreeGrafter"/>
</dbReference>
<dbReference type="GO" id="GO:0043024">
    <property type="term" value="F:ribosomal small subunit binding"/>
    <property type="evidence" value="ECO:0007669"/>
    <property type="project" value="TreeGrafter"/>
</dbReference>
<dbReference type="GO" id="GO:0030490">
    <property type="term" value="P:maturation of SSU-rRNA"/>
    <property type="evidence" value="ECO:0007669"/>
    <property type="project" value="UniProtKB-UniRule"/>
</dbReference>
<dbReference type="FunFam" id="3.30.300.20:FF:000007">
    <property type="entry name" value="Ribosome-binding factor A"/>
    <property type="match status" value="1"/>
</dbReference>
<dbReference type="Gene3D" id="3.30.300.20">
    <property type="match status" value="1"/>
</dbReference>
<dbReference type="HAMAP" id="MF_00003">
    <property type="entry name" value="RbfA"/>
    <property type="match status" value="1"/>
</dbReference>
<dbReference type="InterPro" id="IPR015946">
    <property type="entry name" value="KH_dom-like_a/b"/>
</dbReference>
<dbReference type="InterPro" id="IPR000238">
    <property type="entry name" value="RbfA"/>
</dbReference>
<dbReference type="InterPro" id="IPR023799">
    <property type="entry name" value="RbfA_dom_sf"/>
</dbReference>
<dbReference type="InterPro" id="IPR020053">
    <property type="entry name" value="Ribosome-bd_factorA_CS"/>
</dbReference>
<dbReference type="NCBIfam" id="TIGR00082">
    <property type="entry name" value="rbfA"/>
    <property type="match status" value="1"/>
</dbReference>
<dbReference type="PANTHER" id="PTHR33515">
    <property type="entry name" value="RIBOSOME-BINDING FACTOR A, CHLOROPLASTIC-RELATED"/>
    <property type="match status" value="1"/>
</dbReference>
<dbReference type="PANTHER" id="PTHR33515:SF1">
    <property type="entry name" value="RIBOSOME-BINDING FACTOR A, CHLOROPLASTIC-RELATED"/>
    <property type="match status" value="1"/>
</dbReference>
<dbReference type="Pfam" id="PF02033">
    <property type="entry name" value="RBFA"/>
    <property type="match status" value="1"/>
</dbReference>
<dbReference type="SUPFAM" id="SSF89919">
    <property type="entry name" value="Ribosome-binding factor A, RbfA"/>
    <property type="match status" value="1"/>
</dbReference>
<dbReference type="PROSITE" id="PS01319">
    <property type="entry name" value="RBFA"/>
    <property type="match status" value="1"/>
</dbReference>